<name>MIAA_LAWIP</name>
<dbReference type="EC" id="2.5.1.75" evidence="1"/>
<dbReference type="EMBL" id="AM180252">
    <property type="protein sequence ID" value="CAJ54337.1"/>
    <property type="molecule type" value="Genomic_DNA"/>
</dbReference>
<dbReference type="RefSeq" id="WP_011526366.1">
    <property type="nucleotide sequence ID" value="NC_008011.1"/>
</dbReference>
<dbReference type="SMR" id="Q1MRN9"/>
<dbReference type="STRING" id="363253.LI0281"/>
<dbReference type="KEGG" id="lip:LI0281"/>
<dbReference type="eggNOG" id="COG0324">
    <property type="taxonomic scope" value="Bacteria"/>
</dbReference>
<dbReference type="HOGENOM" id="CLU_032616_0_1_7"/>
<dbReference type="OrthoDB" id="9776390at2"/>
<dbReference type="Proteomes" id="UP000002430">
    <property type="component" value="Chromosome"/>
</dbReference>
<dbReference type="GO" id="GO:0005524">
    <property type="term" value="F:ATP binding"/>
    <property type="evidence" value="ECO:0007669"/>
    <property type="project" value="UniProtKB-UniRule"/>
</dbReference>
<dbReference type="GO" id="GO:0052381">
    <property type="term" value="F:tRNA dimethylallyltransferase activity"/>
    <property type="evidence" value="ECO:0007669"/>
    <property type="project" value="UniProtKB-UniRule"/>
</dbReference>
<dbReference type="GO" id="GO:0006400">
    <property type="term" value="P:tRNA modification"/>
    <property type="evidence" value="ECO:0007669"/>
    <property type="project" value="TreeGrafter"/>
</dbReference>
<dbReference type="Gene3D" id="1.10.20.140">
    <property type="match status" value="1"/>
</dbReference>
<dbReference type="Gene3D" id="3.40.50.300">
    <property type="entry name" value="P-loop containing nucleotide triphosphate hydrolases"/>
    <property type="match status" value="1"/>
</dbReference>
<dbReference type="HAMAP" id="MF_00185">
    <property type="entry name" value="IPP_trans"/>
    <property type="match status" value="1"/>
</dbReference>
<dbReference type="InterPro" id="IPR039657">
    <property type="entry name" value="Dimethylallyltransferase"/>
</dbReference>
<dbReference type="InterPro" id="IPR018022">
    <property type="entry name" value="IPT"/>
</dbReference>
<dbReference type="InterPro" id="IPR027417">
    <property type="entry name" value="P-loop_NTPase"/>
</dbReference>
<dbReference type="NCBIfam" id="TIGR00174">
    <property type="entry name" value="miaA"/>
    <property type="match status" value="1"/>
</dbReference>
<dbReference type="PANTHER" id="PTHR11088">
    <property type="entry name" value="TRNA DIMETHYLALLYLTRANSFERASE"/>
    <property type="match status" value="1"/>
</dbReference>
<dbReference type="PANTHER" id="PTHR11088:SF60">
    <property type="entry name" value="TRNA DIMETHYLALLYLTRANSFERASE"/>
    <property type="match status" value="1"/>
</dbReference>
<dbReference type="Pfam" id="PF01715">
    <property type="entry name" value="IPPT"/>
    <property type="match status" value="1"/>
</dbReference>
<dbReference type="SUPFAM" id="SSF52540">
    <property type="entry name" value="P-loop containing nucleoside triphosphate hydrolases"/>
    <property type="match status" value="2"/>
</dbReference>
<gene>
    <name evidence="1" type="primary">miaA</name>
    <name type="ordered locus">LI0281</name>
</gene>
<organism>
    <name type="scientific">Lawsonia intracellularis (strain PHE/MN1-00)</name>
    <dbReference type="NCBI Taxonomy" id="363253"/>
    <lineage>
        <taxon>Bacteria</taxon>
        <taxon>Pseudomonadati</taxon>
        <taxon>Thermodesulfobacteriota</taxon>
        <taxon>Desulfovibrionia</taxon>
        <taxon>Desulfovibrionales</taxon>
        <taxon>Desulfovibrionaceae</taxon>
        <taxon>Lawsonia</taxon>
    </lineage>
</organism>
<comment type="function">
    <text evidence="1">Catalyzes the transfer of a dimethylallyl group onto the adenine at position 37 in tRNAs that read codons beginning with uridine, leading to the formation of N6-(dimethylallyl)adenosine (i(6)A).</text>
</comment>
<comment type="catalytic activity">
    <reaction evidence="1">
        <text>adenosine(37) in tRNA + dimethylallyl diphosphate = N(6)-dimethylallyladenosine(37) in tRNA + diphosphate</text>
        <dbReference type="Rhea" id="RHEA:26482"/>
        <dbReference type="Rhea" id="RHEA-COMP:10162"/>
        <dbReference type="Rhea" id="RHEA-COMP:10375"/>
        <dbReference type="ChEBI" id="CHEBI:33019"/>
        <dbReference type="ChEBI" id="CHEBI:57623"/>
        <dbReference type="ChEBI" id="CHEBI:74411"/>
        <dbReference type="ChEBI" id="CHEBI:74415"/>
        <dbReference type="EC" id="2.5.1.75"/>
    </reaction>
</comment>
<comment type="cofactor">
    <cofactor evidence="1">
        <name>Mg(2+)</name>
        <dbReference type="ChEBI" id="CHEBI:18420"/>
    </cofactor>
</comment>
<comment type="subunit">
    <text evidence="1">Monomer.</text>
</comment>
<comment type="similarity">
    <text evidence="1">Belongs to the IPP transferase family.</text>
</comment>
<feature type="chain" id="PRO_1000020616" description="tRNA dimethylallyltransferase">
    <location>
        <begin position="1"/>
        <end position="303"/>
    </location>
</feature>
<feature type="region of interest" description="Interaction with substrate tRNA" evidence="1">
    <location>
        <begin position="36"/>
        <end position="39"/>
    </location>
</feature>
<feature type="region of interest" description="Interaction with substrate tRNA" evidence="1">
    <location>
        <begin position="159"/>
        <end position="163"/>
    </location>
</feature>
<feature type="binding site" evidence="1">
    <location>
        <begin position="11"/>
        <end position="18"/>
    </location>
    <ligand>
        <name>ATP</name>
        <dbReference type="ChEBI" id="CHEBI:30616"/>
    </ligand>
</feature>
<feature type="binding site" evidence="1">
    <location>
        <begin position="13"/>
        <end position="18"/>
    </location>
    <ligand>
        <name>substrate</name>
    </ligand>
</feature>
<feature type="site" description="Interaction with substrate tRNA" evidence="1">
    <location>
        <position position="101"/>
    </location>
</feature>
<accession>Q1MRN9</accession>
<sequence length="303" mass="34858">MNYRKVICIVGPTGVGKSEIAFHLAKRYDGIIINADSRQLYKGVPIITAQPTFEERSLIPHKLYACLDLHEKISAGRWATLAAEQLDSVCHTKIPLLVGGTGLYLRALFDGIVTIPPISTELSLTMEKQAEEKGISFLYNMLKVHDPLYANSIHPNDRQRVLRALTVFYETGKTFTWWHQQVTEAYPATVLRIGIKIPLIELAPLLEKRIDKMFVQGAIKEVITTYKRYFNKDVQNWSGIGYMELLGAIKGEYTFNEAKERWLKNTRSYAKRQLTWFNADKRIIWFCPDQLEDIQKCVENWLS</sequence>
<evidence type="ECO:0000255" key="1">
    <source>
        <dbReference type="HAMAP-Rule" id="MF_00185"/>
    </source>
</evidence>
<reference key="1">
    <citation type="submission" date="2005-11" db="EMBL/GenBank/DDBJ databases">
        <title>The complete genome sequence of Lawsonia intracellularis: the causative agent of proliferative enteropathy.</title>
        <authorList>
            <person name="Kaur K."/>
            <person name="Zhang Q."/>
            <person name="Beckler D."/>
            <person name="Munir S."/>
            <person name="Li L."/>
            <person name="Kinsley K."/>
            <person name="Herron L."/>
            <person name="Peterson A."/>
            <person name="May B."/>
            <person name="Singh S."/>
            <person name="Gebhart C."/>
            <person name="Kapur V."/>
        </authorList>
    </citation>
    <scope>NUCLEOTIDE SEQUENCE [LARGE SCALE GENOMIC DNA]</scope>
    <source>
        <strain>PHE/MN1-00</strain>
    </source>
</reference>
<protein>
    <recommendedName>
        <fullName evidence="1">tRNA dimethylallyltransferase</fullName>
        <ecNumber evidence="1">2.5.1.75</ecNumber>
    </recommendedName>
    <alternativeName>
        <fullName evidence="1">Dimethylallyl diphosphate:tRNA dimethylallyltransferase</fullName>
        <shortName evidence="1">DMAPP:tRNA dimethylallyltransferase</shortName>
        <shortName evidence="1">DMATase</shortName>
    </alternativeName>
    <alternativeName>
        <fullName evidence="1">Isopentenyl-diphosphate:tRNA isopentenyltransferase</fullName>
        <shortName evidence="1">IPP transferase</shortName>
        <shortName evidence="1">IPPT</shortName>
        <shortName evidence="1">IPTase</shortName>
    </alternativeName>
</protein>
<proteinExistence type="inferred from homology"/>
<keyword id="KW-0067">ATP-binding</keyword>
<keyword id="KW-0460">Magnesium</keyword>
<keyword id="KW-0547">Nucleotide-binding</keyword>
<keyword id="KW-1185">Reference proteome</keyword>
<keyword id="KW-0808">Transferase</keyword>
<keyword id="KW-0819">tRNA processing</keyword>